<protein>
    <recommendedName>
        <fullName>Uncharacterized mitochondrial protein Mp05</fullName>
    </recommendedName>
    <alternativeName>
        <fullName>ORF447</fullName>
    </alternativeName>
</protein>
<name>MP05_DICDI</name>
<reference key="1">
    <citation type="journal article" date="1997" name="Curr. Genet.">
        <title>Group-I introns in the cytochrome c oxidase genes of Dictyostelium discoideum: two related ORFs in one loop of a group-I intron, a cox1/2 hybrid gene and an unusually large cox3 gene.</title>
        <authorList>
            <person name="Ogawa S."/>
            <person name="Matsuo K."/>
            <person name="Angata K."/>
            <person name="Yanagisawa K."/>
            <person name="Tanaka Y."/>
        </authorList>
    </citation>
    <scope>NUCLEOTIDE SEQUENCE [GENOMIC DNA]</scope>
    <source>
        <strain>AX3</strain>
    </source>
</reference>
<reference key="2">
    <citation type="journal article" date="2000" name="Mol. Gen. Genet.">
        <title>The mitochondrial DNA of Dictyostelium discoideum: complete sequence, gene content and genome organization.</title>
        <authorList>
            <person name="Ogawa S."/>
            <person name="Yoshino R."/>
            <person name="Angata K."/>
            <person name="Iwamoto M."/>
            <person name="Pi M."/>
            <person name="Kuroe K."/>
            <person name="Matsuo K."/>
            <person name="Morio T."/>
            <person name="Urushihara H."/>
            <person name="Yanagisawa K."/>
            <person name="Tanaka Y."/>
        </authorList>
    </citation>
    <scope>NUCLEOTIDE SEQUENCE [LARGE SCALE GENOMIC DNA]</scope>
    <source>
        <strain>AX3</strain>
    </source>
</reference>
<keyword id="KW-0496">Mitochondrion</keyword>
<keyword id="KW-1185">Reference proteome</keyword>
<accession>O21050</accession>
<dbReference type="EMBL" id="D16579">
    <property type="protein sequence ID" value="BAA21121.1"/>
    <property type="molecule type" value="Genomic_DNA"/>
</dbReference>
<dbReference type="EMBL" id="AB000109">
    <property type="protein sequence ID" value="BAA78054.1"/>
    <property type="molecule type" value="Genomic_DNA"/>
</dbReference>
<dbReference type="PIR" id="T43750">
    <property type="entry name" value="T43750"/>
</dbReference>
<dbReference type="RefSeq" id="NP_050072.1">
    <property type="nucleotide sequence ID" value="NC_000895.1"/>
</dbReference>
<dbReference type="SMR" id="O21050"/>
<dbReference type="STRING" id="44689.O21050"/>
<dbReference type="GeneID" id="2193939"/>
<dbReference type="KEGG" id="ddi:DidioMp05"/>
<dbReference type="dictyBase" id="DDB_G0294090">
    <property type="gene designation" value="DidioMp05"/>
</dbReference>
<dbReference type="VEuPathDB" id="AmoebaDB:DidioMp05"/>
<dbReference type="InParanoid" id="O21050"/>
<dbReference type="PRO" id="PR:O21050"/>
<dbReference type="Proteomes" id="UP000002195">
    <property type="component" value="Mitochondrion"/>
</dbReference>
<dbReference type="GO" id="GO:0005739">
    <property type="term" value="C:mitochondrion"/>
    <property type="evidence" value="ECO:0007669"/>
    <property type="project" value="UniProtKB-SubCell"/>
</dbReference>
<dbReference type="GO" id="GO:0019953">
    <property type="term" value="P:sexual reproduction"/>
    <property type="evidence" value="ECO:0000270"/>
    <property type="project" value="dictyBase"/>
</dbReference>
<proteinExistence type="predicted"/>
<gene>
    <name type="primary">DidioMp05</name>
    <name type="ORF">DDB_G0294090</name>
</gene>
<feature type="chain" id="PRO_0000312713" description="Uncharacterized mitochondrial protein Mp05">
    <location>
        <begin position="1"/>
        <end position="447"/>
    </location>
</feature>
<comment type="subcellular location">
    <subcellularLocation>
        <location>Mitochondrion</location>
    </subcellularLocation>
</comment>
<sequence>MLITKNNKKKIKKISKRGTNKAFLQKLLSVEKLTNLLKKKQRKVSLARKAQKKIYHKGKFKITDIISIPLRGEVIKRIIKPKLQGIDLVVDEMDHNPINDIEILFYTREQEEERRQEEPEDYPLDAWDKDVLGIVSEDEPQYKNPTDFIYHWEFGILHPVASFEEFFEIDFNHVALHKVDSYGDFAFYGNDPYVKTFEYPTEQYYISEEDAGQFEIDYLLHYSTKLERHSQYLLKRKENYNPKQPQILETDSRSEHYLMNYFYYNKLENVLEKKEGIDDAEVYKFIKLDFGEKMELKLEKFYDLNRERRFRVKKLSQSKLYEFEKAALKGIGFDCFMLIVGIIIFLASSPYLFSQLPWRVKYSLHNTWYHNLLEVIDVLFSMPKVINLEWLYLQAMWEGELTVLKIRGGISVLTAIETIMSVMSNYKDLSQTSQIINYLANFSFDIY</sequence>
<organism>
    <name type="scientific">Dictyostelium discoideum</name>
    <name type="common">Social amoeba</name>
    <dbReference type="NCBI Taxonomy" id="44689"/>
    <lineage>
        <taxon>Eukaryota</taxon>
        <taxon>Amoebozoa</taxon>
        <taxon>Evosea</taxon>
        <taxon>Eumycetozoa</taxon>
        <taxon>Dictyostelia</taxon>
        <taxon>Dictyosteliales</taxon>
        <taxon>Dictyosteliaceae</taxon>
        <taxon>Dictyostelium</taxon>
    </lineage>
</organism>
<geneLocation type="mitochondrion"/>